<comment type="function">
    <text evidence="2">Exchanges the guanine residue with 7-cyano-7-deazaguanine (preQ0) at position 15 in the dihydrouridine loop (D-loop) of archaeal tRNAs. Can also utilize guanine as substrate.</text>
</comment>
<comment type="catalytic activity">
    <reaction evidence="2">
        <text>guanosine(15) in tRNA + 7-cyano-7-deazaguanine = 7-cyano-7-carbaguanosine(15) in tRNA + guanine</text>
        <dbReference type="Rhea" id="RHEA:43164"/>
        <dbReference type="Rhea" id="RHEA-COMP:10371"/>
        <dbReference type="Rhea" id="RHEA-COMP:10372"/>
        <dbReference type="ChEBI" id="CHEBI:16235"/>
        <dbReference type="ChEBI" id="CHEBI:45075"/>
        <dbReference type="ChEBI" id="CHEBI:74269"/>
        <dbReference type="ChEBI" id="CHEBI:82850"/>
        <dbReference type="EC" id="2.4.2.48"/>
    </reaction>
</comment>
<comment type="cofactor">
    <cofactor evidence="1">
        <name>Zn(2+)</name>
        <dbReference type="ChEBI" id="CHEBI:29105"/>
    </cofactor>
    <text evidence="1">Binds 1 zinc ion per subunit.</text>
</comment>
<comment type="biophysicochemical properties">
    <phDependence>
        <text evidence="2">Optimum pH is 5.5.</text>
    </phDependence>
    <temperatureDependence>
        <text evidence="2">Optimum temperature is 85 degrees Celsius.</text>
    </temperatureDependence>
</comment>
<comment type="pathway">
    <text evidence="1">tRNA modification; archaeosine-tRNA biosynthesis.</text>
</comment>
<comment type="similarity">
    <text evidence="1">Belongs to the archaeosine tRNA-ribosyltransferase family.</text>
</comment>
<comment type="sequence caution" evidence="3">
    <conflict type="frameshift">
        <sequence resource="EMBL-CDS" id="AAB98424"/>
    </conflict>
</comment>
<gene>
    <name evidence="1" type="primary">tgtA</name>
    <name type="ordered locus">MJ0436</name>
</gene>
<proteinExistence type="evidence at protein level"/>
<reference key="1">
    <citation type="journal article" date="2000" name="J. Biol. Chem.">
        <title>Hypermodification of tRNA in Thermophilic archaea. Cloning, overexpression, and characterization of tRNA-guanine transglycosylase from Methanococcus jannaschii.</title>
        <authorList>
            <person name="Bai Y."/>
            <person name="Fox D.T."/>
            <person name="Lacy J.A."/>
            <person name="Van Lanen S.G."/>
            <person name="Iwata-Reuyl D."/>
        </authorList>
    </citation>
    <scope>NUCLEOTIDE SEQUENCE [GENOMIC DNA]</scope>
    <scope>FUNCTION</scope>
    <scope>CATALYTIC ACTIVITY</scope>
    <scope>SUBSTRATES</scope>
    <scope>BIOPHYSICOCHEMICAL PROPERTIES</scope>
</reference>
<reference key="2">
    <citation type="journal article" date="1996" name="Science">
        <title>Complete genome sequence of the methanogenic archaeon, Methanococcus jannaschii.</title>
        <authorList>
            <person name="Bult C.J."/>
            <person name="White O."/>
            <person name="Olsen G.J."/>
            <person name="Zhou L."/>
            <person name="Fleischmann R.D."/>
            <person name="Sutton G.G."/>
            <person name="Blake J.A."/>
            <person name="FitzGerald L.M."/>
            <person name="Clayton R.A."/>
            <person name="Gocayne J.D."/>
            <person name="Kerlavage A.R."/>
            <person name="Dougherty B.A."/>
            <person name="Tomb J.-F."/>
            <person name="Adams M.D."/>
            <person name="Reich C.I."/>
            <person name="Overbeek R."/>
            <person name="Kirkness E.F."/>
            <person name="Weinstock K.G."/>
            <person name="Merrick J.M."/>
            <person name="Glodek A."/>
            <person name="Scott J.L."/>
            <person name="Geoghagen N.S.M."/>
            <person name="Weidman J.F."/>
            <person name="Fuhrmann J.L."/>
            <person name="Nguyen D."/>
            <person name="Utterback T.R."/>
            <person name="Kelley J.M."/>
            <person name="Peterson J.D."/>
            <person name="Sadow P.W."/>
            <person name="Hanna M.C."/>
            <person name="Cotton M.D."/>
            <person name="Roberts K.M."/>
            <person name="Hurst M.A."/>
            <person name="Kaine B.P."/>
            <person name="Borodovsky M."/>
            <person name="Klenk H.-P."/>
            <person name="Fraser C.M."/>
            <person name="Smith H.O."/>
            <person name="Woese C.R."/>
            <person name="Venter J.C."/>
        </authorList>
    </citation>
    <scope>NUCLEOTIDE SEQUENCE [LARGE SCALE GENOMIC DNA]</scope>
    <source>
        <strain>ATCC 43067 / DSM 2661 / JAL-1 / JCM 10045 / NBRC 100440</strain>
    </source>
</reference>
<feature type="chain" id="PRO_0000135572" description="tRNA-guanine(15) transglycosylase">
    <location>
        <begin position="1"/>
        <end position="655"/>
    </location>
</feature>
<feature type="domain" description="PUA">
    <location>
        <begin position="577"/>
        <end position="652"/>
    </location>
</feature>
<feature type="active site" description="Nucleophile" evidence="1">
    <location>
        <position position="89"/>
    </location>
</feature>
<feature type="binding site" evidence="1">
    <location>
        <position position="124"/>
    </location>
    <ligand>
        <name>substrate</name>
    </ligand>
</feature>
<feature type="binding site" evidence="1">
    <location>
        <position position="195"/>
    </location>
    <ligand>
        <name>substrate</name>
    </ligand>
</feature>
<feature type="binding site" evidence="1">
    <location>
        <position position="281"/>
    </location>
    <ligand>
        <name>Zn(2+)</name>
        <dbReference type="ChEBI" id="CHEBI:29105"/>
    </ligand>
</feature>
<feature type="binding site" evidence="1">
    <location>
        <position position="283"/>
    </location>
    <ligand>
        <name>Zn(2+)</name>
        <dbReference type="ChEBI" id="CHEBI:29105"/>
    </ligand>
</feature>
<feature type="binding site" evidence="1">
    <location>
        <position position="286"/>
    </location>
    <ligand>
        <name>Zn(2+)</name>
        <dbReference type="ChEBI" id="CHEBI:29105"/>
    </ligand>
</feature>
<organism>
    <name type="scientific">Methanocaldococcus jannaschii (strain ATCC 43067 / DSM 2661 / JAL-1 / JCM 10045 / NBRC 100440)</name>
    <name type="common">Methanococcus jannaschii</name>
    <dbReference type="NCBI Taxonomy" id="243232"/>
    <lineage>
        <taxon>Archaea</taxon>
        <taxon>Methanobacteriati</taxon>
        <taxon>Methanobacteriota</taxon>
        <taxon>Methanomada group</taxon>
        <taxon>Methanococci</taxon>
        <taxon>Methanococcales</taxon>
        <taxon>Methanocaldococcaceae</taxon>
        <taxon>Methanocaldococcus</taxon>
    </lineage>
</organism>
<keyword id="KW-0328">Glycosyltransferase</keyword>
<keyword id="KW-0479">Metal-binding</keyword>
<keyword id="KW-1185">Reference proteome</keyword>
<keyword id="KW-0808">Transferase</keyword>
<keyword id="KW-0819">tRNA processing</keyword>
<keyword id="KW-0862">Zinc</keyword>
<evidence type="ECO:0000255" key="1">
    <source>
        <dbReference type="HAMAP-Rule" id="MF_01634"/>
    </source>
</evidence>
<evidence type="ECO:0000269" key="2">
    <source>
    </source>
</evidence>
<evidence type="ECO:0000305" key="3"/>
<sequence length="655" mass="76076">MTFEIKHRDAMGRIGILNINGKKIETPTIMPVIHPNPKKQIVSMDLINKLADVIITNSYITYKTKHLREIAEEKGIHKLIGFDKVIVTDSGSFQLGVYGDVEVEPMEIIEFQERIGVDVGTILDIPTPPDVDRERAEKELEETLKRAKASIELKEERGFKLLLNGTVQGSTYLDLRQKSAKEMAKLGFDIYPIGAVVPLMEQYRYRDVAEIIINSKMYLPTNKPVHLFGCGHPMFFALAVALGCDLFDSAAYALYAKDDRYLTERGTLHLEEIKDLKAFPCSCPVCSSYTPKELASLNKKERERLLAEHNLYVTFEEINRIKQAIRDGSLWELVEERVRCHPKLLEAYRVVRKYIDYIEKFDPVTKKSAFFYTGIESMFRPEVLRHKKRLKRLRYEKVYITTVSSSIEKPYHEHLNVVETDVDILIKDPVFGFIPYYIDTVYPLSQHEIPELFDYEKEINKRFVDEFIDWLKKKIGEDNILDIMTYNYYINYFSANKKINADALRIRKMLQYQYGFDIIDDELMNKIKVVRSKTTGRLRQVLDENGEILFSVRSNDNLLIPSEKGAKLLWKKIPFPKYRVVVNKEAEEFAREGRNVFAKFVIDCDEELRPYEEVLVVNEDDELLAYGTTILNGIELREFNYGLAVKVRGGLKINK</sequence>
<name>ATGT_METJA</name>
<dbReference type="EC" id="2.4.2.48" evidence="1"/>
<dbReference type="EMBL" id="L77117">
    <property type="protein sequence ID" value="AAB98424.1"/>
    <property type="status" value="ALT_FRAME"/>
    <property type="molecule type" value="Genomic_DNA"/>
</dbReference>
<dbReference type="PIR" id="D64354">
    <property type="entry name" value="D64354"/>
</dbReference>
<dbReference type="SMR" id="Q57878"/>
<dbReference type="FunCoup" id="Q57878">
    <property type="interactions" value="23"/>
</dbReference>
<dbReference type="STRING" id="243232.MJ_0436"/>
<dbReference type="PaxDb" id="243232-MJ_0436"/>
<dbReference type="EnsemblBacteria" id="AAB98424">
    <property type="protein sequence ID" value="AAB98424"/>
    <property type="gene ID" value="MJ_0436"/>
</dbReference>
<dbReference type="KEGG" id="mja:MJ_0436"/>
<dbReference type="eggNOG" id="arCOG00989">
    <property type="taxonomic scope" value="Archaea"/>
</dbReference>
<dbReference type="eggNOG" id="arCOG00991">
    <property type="taxonomic scope" value="Archaea"/>
</dbReference>
<dbReference type="HOGENOM" id="CLU_030083_0_0_2"/>
<dbReference type="InParanoid" id="Q57878"/>
<dbReference type="PhylomeDB" id="Q57878"/>
<dbReference type="BioCyc" id="MetaCyc:MONOMER-16210"/>
<dbReference type="BRENDA" id="2.4.2.48">
    <property type="organism ID" value="3260"/>
</dbReference>
<dbReference type="UniPathway" id="UPA00393"/>
<dbReference type="Proteomes" id="UP000000805">
    <property type="component" value="Chromosome"/>
</dbReference>
<dbReference type="GO" id="GO:0005737">
    <property type="term" value="C:cytoplasm"/>
    <property type="evidence" value="ECO:0000318"/>
    <property type="project" value="GO_Central"/>
</dbReference>
<dbReference type="GO" id="GO:0016763">
    <property type="term" value="F:pentosyltransferase activity"/>
    <property type="evidence" value="ECO:0007669"/>
    <property type="project" value="UniProtKB-UniRule"/>
</dbReference>
<dbReference type="GO" id="GO:0003723">
    <property type="term" value="F:RNA binding"/>
    <property type="evidence" value="ECO:0007669"/>
    <property type="project" value="InterPro"/>
</dbReference>
<dbReference type="GO" id="GO:0008270">
    <property type="term" value="F:zinc ion binding"/>
    <property type="evidence" value="ECO:0007669"/>
    <property type="project" value="UniProtKB-UniRule"/>
</dbReference>
<dbReference type="GO" id="GO:0002099">
    <property type="term" value="P:tRNA wobble guanine modification"/>
    <property type="evidence" value="ECO:0000318"/>
    <property type="project" value="GO_Central"/>
</dbReference>
<dbReference type="CDD" id="cd21149">
    <property type="entry name" value="PUA_archaeosine_TGT"/>
    <property type="match status" value="1"/>
</dbReference>
<dbReference type="Gene3D" id="3.90.1020.10">
    <property type="entry name" value="ArcTGT, C1 domain"/>
    <property type="match status" value="1"/>
</dbReference>
<dbReference type="Gene3D" id="3.10.450.90">
    <property type="entry name" value="ArcTGT, C2 domain"/>
    <property type="match status" value="1"/>
</dbReference>
<dbReference type="Gene3D" id="2.30.130.10">
    <property type="entry name" value="PUA domain"/>
    <property type="match status" value="1"/>
</dbReference>
<dbReference type="Gene3D" id="3.20.20.105">
    <property type="entry name" value="Queuine tRNA-ribosyltransferase-like"/>
    <property type="match status" value="1"/>
</dbReference>
<dbReference type="HAMAP" id="MF_01634">
    <property type="entry name" value="TgtA_arch"/>
    <property type="match status" value="1"/>
</dbReference>
<dbReference type="InterPro" id="IPR050076">
    <property type="entry name" value="ArchSynthase1/Queuine_TRR"/>
</dbReference>
<dbReference type="InterPro" id="IPR038370">
    <property type="entry name" value="ArcTGT_C1_sf"/>
</dbReference>
<dbReference type="InterPro" id="IPR002478">
    <property type="entry name" value="PUA"/>
</dbReference>
<dbReference type="InterPro" id="IPR015947">
    <property type="entry name" value="PUA-like_sf"/>
</dbReference>
<dbReference type="InterPro" id="IPR036974">
    <property type="entry name" value="PUA_sf"/>
</dbReference>
<dbReference type="InterPro" id="IPR036511">
    <property type="entry name" value="TGT-like_sf"/>
</dbReference>
<dbReference type="InterPro" id="IPR029402">
    <property type="entry name" value="TGT_C2"/>
</dbReference>
<dbReference type="InterPro" id="IPR038250">
    <property type="entry name" value="TGT_C2_sf"/>
</dbReference>
<dbReference type="InterPro" id="IPR004804">
    <property type="entry name" value="TgtA"/>
</dbReference>
<dbReference type="InterPro" id="IPR002616">
    <property type="entry name" value="tRNA_ribo_trans-like"/>
</dbReference>
<dbReference type="InterPro" id="IPR004521">
    <property type="entry name" value="Uncharacterised_CHP00451"/>
</dbReference>
<dbReference type="NCBIfam" id="TIGR00432">
    <property type="entry name" value="arcsn_tRNA_tgt"/>
    <property type="match status" value="1"/>
</dbReference>
<dbReference type="NCBIfam" id="TIGR00449">
    <property type="entry name" value="tgt_general"/>
    <property type="match status" value="1"/>
</dbReference>
<dbReference type="NCBIfam" id="TIGR00451">
    <property type="entry name" value="unchar_dom_2"/>
    <property type="match status" value="1"/>
</dbReference>
<dbReference type="PANTHER" id="PTHR46499">
    <property type="entry name" value="QUEUINE TRNA-RIBOSYLTRANSFERASE"/>
    <property type="match status" value="1"/>
</dbReference>
<dbReference type="PANTHER" id="PTHR46499:SF1">
    <property type="entry name" value="QUEUINE TRNA-RIBOSYLTRANSFERASE"/>
    <property type="match status" value="1"/>
</dbReference>
<dbReference type="Pfam" id="PF01472">
    <property type="entry name" value="PUA"/>
    <property type="match status" value="1"/>
</dbReference>
<dbReference type="Pfam" id="PF01702">
    <property type="entry name" value="TGT"/>
    <property type="match status" value="1"/>
</dbReference>
<dbReference type="Pfam" id="PF14810">
    <property type="entry name" value="TGT_C2"/>
    <property type="match status" value="1"/>
</dbReference>
<dbReference type="SMART" id="SM00359">
    <property type="entry name" value="PUA"/>
    <property type="match status" value="1"/>
</dbReference>
<dbReference type="SUPFAM" id="SSF88802">
    <property type="entry name" value="Pre-PUA domain"/>
    <property type="match status" value="1"/>
</dbReference>
<dbReference type="SUPFAM" id="SSF88697">
    <property type="entry name" value="PUA domain-like"/>
    <property type="match status" value="1"/>
</dbReference>
<dbReference type="SUPFAM" id="SSF51713">
    <property type="entry name" value="tRNA-guanine transglycosylase"/>
    <property type="match status" value="1"/>
</dbReference>
<dbReference type="PROSITE" id="PS50890">
    <property type="entry name" value="PUA"/>
    <property type="match status" value="1"/>
</dbReference>
<accession>Q57878</accession>
<protein>
    <recommendedName>
        <fullName evidence="1">tRNA-guanine(15) transglycosylase</fullName>
        <ecNumber evidence="1">2.4.2.48</ecNumber>
    </recommendedName>
    <alternativeName>
        <fullName evidence="1">7-cyano-7-deazaguanine tRNA-ribosyltransferase</fullName>
    </alternativeName>
    <alternativeName>
        <fullName evidence="1">Archaeal tRNA-guanine transglycosylase</fullName>
    </alternativeName>
</protein>